<evidence type="ECO:0000250" key="1"/>
<evidence type="ECO:0000250" key="2">
    <source>
        <dbReference type="UniProtKB" id="Q8NFM7"/>
    </source>
</evidence>
<evidence type="ECO:0000255" key="3"/>
<evidence type="ECO:0000255" key="4">
    <source>
        <dbReference type="PROSITE-ProRule" id="PRU00867"/>
    </source>
</evidence>
<evidence type="ECO:0000256" key="5">
    <source>
        <dbReference type="SAM" id="MobiDB-lite"/>
    </source>
</evidence>
<evidence type="ECO:0000269" key="6">
    <source>
    </source>
</evidence>
<evidence type="ECO:0000269" key="7">
    <source>
    </source>
</evidence>
<evidence type="ECO:0000269" key="8">
    <source>
    </source>
</evidence>
<evidence type="ECO:0000269" key="9">
    <source>
    </source>
</evidence>
<evidence type="ECO:0000269" key="10">
    <source>
    </source>
</evidence>
<evidence type="ECO:0000303" key="11">
    <source>
    </source>
</evidence>
<evidence type="ECO:0000305" key="12"/>
<comment type="function">
    <text evidence="2 7 8 9 10">Feedback inhibitor of fibroblast growth factor mediated Ras-MAPK signaling and ERK activation (PubMed:12604616). Regulates the nuclear ERK signaling pathway by spatially blocking nuclear translocation of activated ERK (By similarity). Mediates JNK activation and may be involved in apoptosis (PubMed:15277532). May inhibit FGF-induced FGFR1 tyrosine phosphorylation (PubMed:12604616). Might have a role in the early stages of fate specification of GnRH-secreting neurons (PubMed:23643382). Inhibits TGFB-induced epithelial-to-mesenchymal transition in lens epithelial cells (PubMed:25576668).</text>
</comment>
<comment type="subunit">
    <text evidence="1 7 8">Self-associates. Interacts with FGFR2 and phosphorylated MAP2K1 or MAP2K2. Associates with a MAP2K1/2-MAPK1/3 complex (By similarity). Interacts with FGFR1 and MAP3K7.</text>
</comment>
<comment type="subcellular location">
    <subcellularLocation>
        <location evidence="1">Golgi apparatus membrane</location>
        <topology evidence="1">Single-pass type I membrane protein</topology>
    </subcellularLocation>
    <subcellularLocation>
        <location evidence="1">Cell membrane</location>
        <topology evidence="1">Single-pass type I membrane protein</topology>
    </subcellularLocation>
    <text evidence="1">Associated with the Golgi apparatus and is partially translocated to the plasma membrane upon stimulation.</text>
</comment>
<comment type="alternative products">
    <event type="alternative splicing"/>
    <isoform>
        <id>Q8JZL1-1</id>
        <name>1</name>
        <name>IL17RLM-L</name>
        <name>Long</name>
        <sequence type="displayed"/>
    </isoform>
    <isoform>
        <id>Q8JZL1-2</id>
        <name>2</name>
        <name>IL17RLM-S</name>
        <name>Short</name>
        <sequence type="described" ref="VSP_015585"/>
    </isoform>
</comment>
<comment type="developmental stage">
    <text evidence="6">During early embryogenesis, predominantly expressed at 6.5 dpc and 9.5 dpc in the forebrain, mid-hindbrain boundary, branchial arches, somites, limb bud and tailbud. At 12.5 dpc additionally expressed in the diencephalon, optic stalk, pituitary, olfactory and oral epithelium, tooth primordia, somites, developing metanephric kidney and stomach. Expressed in the neopallial cortex, rhombic lip and dorsal regions of the myelencephalon and in the frontal nasal process. Expressed in the commissural plate and septal area of the forebrain and in the hippocampus, lens and optic cup. In the oral region, expressed in the tongue and in the mesenchyme of the first branchial arch. Also expressed in the developing inner ear. Expression patterns remain essentially unchanged at 15.5 dpc, with the addition of a strong expression in the submandibular gland.</text>
</comment>
<feature type="signal peptide" evidence="3">
    <location>
        <begin position="1"/>
        <end position="16"/>
    </location>
</feature>
<feature type="chain" id="PRO_0000041872" description="Interleukin-17 receptor D">
    <location>
        <begin position="17"/>
        <end position="738"/>
    </location>
</feature>
<feature type="topological domain" description="Extracellular" evidence="3">
    <location>
        <begin position="17"/>
        <end position="299"/>
    </location>
</feature>
<feature type="transmembrane region" description="Helical" evidence="3">
    <location>
        <begin position="300"/>
        <end position="320"/>
    </location>
</feature>
<feature type="topological domain" description="Cytoplasmic" evidence="3">
    <location>
        <begin position="321"/>
        <end position="738"/>
    </location>
</feature>
<feature type="domain" description="SEFIR" evidence="4">
    <location>
        <begin position="355"/>
        <end position="509"/>
    </location>
</feature>
<feature type="region of interest" description="Disordered" evidence="5">
    <location>
        <begin position="653"/>
        <end position="738"/>
    </location>
</feature>
<feature type="compositionally biased region" description="Low complexity" evidence="5">
    <location>
        <begin position="667"/>
        <end position="702"/>
    </location>
</feature>
<feature type="compositionally biased region" description="Basic and acidic residues" evidence="5">
    <location>
        <begin position="720"/>
        <end position="731"/>
    </location>
</feature>
<feature type="glycosylation site" description="N-linked (GlcNAc...) asparagine" evidence="3">
    <location>
        <position position="19"/>
    </location>
</feature>
<feature type="glycosylation site" description="N-linked (GlcNAc...) asparagine" evidence="3">
    <location>
        <position position="55"/>
    </location>
</feature>
<feature type="glycosylation site" description="N-linked (GlcNAc...) asparagine" evidence="3">
    <location>
        <position position="62"/>
    </location>
</feature>
<feature type="glycosylation site" description="N-linked (GlcNAc...) asparagine" evidence="3">
    <location>
        <position position="80"/>
    </location>
</feature>
<feature type="glycosylation site" description="N-linked (GlcNAc...) asparagine" evidence="3">
    <location>
        <position position="137"/>
    </location>
</feature>
<feature type="glycosylation site" description="N-linked (GlcNAc...) asparagine" evidence="3">
    <location>
        <position position="171"/>
    </location>
</feature>
<feature type="glycosylation site" description="N-linked (GlcNAc...) asparagine" evidence="3">
    <location>
        <position position="206"/>
    </location>
</feature>
<feature type="glycosylation site" description="N-linked (GlcNAc...) asparagine" evidence="3">
    <location>
        <position position="277"/>
    </location>
</feature>
<feature type="splice variant" id="VSP_015585" description="In isoform 2." evidence="11">
    <location>
        <begin position="1"/>
        <end position="144"/>
    </location>
</feature>
<feature type="sequence conflict" description="In Ref. 2; AAM74078." evidence="12" ref="2">
    <original>L</original>
    <variation>F</variation>
    <location>
        <position position="715"/>
    </location>
</feature>
<protein>
    <recommendedName>
        <fullName>Interleukin-17 receptor D</fullName>
        <shortName>IL-17 receptor D</shortName>
        <shortName>IL-17RD</shortName>
    </recommendedName>
    <alternativeName>
        <fullName>Interleukin-17 receptor-like protein</fullName>
    </alternativeName>
    <alternativeName>
        <fullName>Sef homolog</fullName>
        <shortName>mSef</shortName>
    </alternativeName>
</protein>
<name>I17RD_MOUSE</name>
<keyword id="KW-0025">Alternative splicing</keyword>
<keyword id="KW-1003">Cell membrane</keyword>
<keyword id="KW-0325">Glycoprotein</keyword>
<keyword id="KW-0333">Golgi apparatus</keyword>
<keyword id="KW-0472">Membrane</keyword>
<keyword id="KW-0675">Receptor</keyword>
<keyword id="KW-1185">Reference proteome</keyword>
<keyword id="KW-0732">Signal</keyword>
<keyword id="KW-0812">Transmembrane</keyword>
<keyword id="KW-1133">Transmembrane helix</keyword>
<reference key="1">
    <citation type="journal article" date="2002" name="Mech. Dev.">
        <title>Cloning of the mouse Sef gene and comparative analysis of its expression with Fgf8 and Spry2 during embryogenesis.</title>
        <authorList>
            <person name="Lin W."/>
            <person name="Fuerthauer M."/>
            <person name="Thisse B."/>
            <person name="Thisse C."/>
            <person name="Jing N."/>
            <person name="Ang S.-L."/>
        </authorList>
    </citation>
    <scope>NUCLEOTIDE SEQUENCE [MRNA] (ISOFORM 1)</scope>
    <scope>DEVELOPMENTAL STAGE</scope>
</reference>
<reference key="2">
    <citation type="journal article" date="2003" name="J. Biol. Chem.">
        <title>hSef inhibits PC-12 cell differentiation by interfering with Ras-mitogen-activated protein kinase MAPK signaling.</title>
        <authorList>
            <person name="Xiong S.Q."/>
            <person name="Zhao Q.H."/>
            <person name="Rong Z."/>
            <person name="Huang G.R."/>
            <person name="Huang Y."/>
            <person name="Chen P.L."/>
            <person name="Zhang S."/>
            <person name="Liu L."/>
            <person name="Chang Z.J."/>
        </authorList>
    </citation>
    <scope>NUCLEOTIDE SEQUENCE [MRNA] (ISOFORMS 1 AND 2)</scope>
    <source>
        <strain>BALB/cJ</strain>
    </source>
</reference>
<reference key="3">
    <citation type="journal article" date="2004" name="Genome Res.">
        <title>The status, quality, and expansion of the NIH full-length cDNA project: the Mammalian Gene Collection (MGC).</title>
        <authorList>
            <consortium name="The MGC Project Team"/>
        </authorList>
    </citation>
    <scope>NUCLEOTIDE SEQUENCE [LARGE SCALE MRNA] (ISOFORM 1)</scope>
    <source>
        <tissue>Brain</tissue>
    </source>
</reference>
<reference key="4">
    <citation type="journal article" date="2003" name="J. Biol. Chem.">
        <title>Sef inhibits fibroblast growth factor signaling by inhibiting FGFR1 tyrosine phosphorylation and subsequent ERK activation.</title>
        <authorList>
            <person name="Kovalenko D."/>
            <person name="Yang X."/>
            <person name="Nadeau R.J."/>
            <person name="Harkins L.K."/>
            <person name="Friesel R."/>
        </authorList>
    </citation>
    <scope>FUNCTION</scope>
    <scope>INTERACTION WITH FGFR1</scope>
</reference>
<reference key="5">
    <citation type="journal article" date="2004" name="J. Biol. Chem.">
        <title>Sef interacts with TAK1 and mediates JNK activation and apoptosis.</title>
        <authorList>
            <person name="Yang X."/>
            <person name="Kovalenko D."/>
            <person name="Nadeau R.J."/>
            <person name="Harkins L.K."/>
            <person name="Mitchell J."/>
            <person name="Zubanova O."/>
            <person name="Chen P.-Y."/>
            <person name="Friesel R."/>
        </authorList>
    </citation>
    <scope>FUNCTION</scope>
    <scope>INTERACTION WITH MAP3K7</scope>
</reference>
<reference key="6">
    <citation type="journal article" date="2013" name="Am. J. Hum. Genet.">
        <title>Mutations in FGF17, IL17RD, DUSP6, SPRY4, and FLRT3 are identified in individuals with congenital hypogonadotropic hypogonadism.</title>
        <authorList>
            <person name="Miraoui H."/>
            <person name="Dwyer A.A."/>
            <person name="Sykiotis G.P."/>
            <person name="Plummer L."/>
            <person name="Chung W."/>
            <person name="Feng B."/>
            <person name="Beenken A."/>
            <person name="Clarke J."/>
            <person name="Pers T.H."/>
            <person name="Dworzynski P."/>
            <person name="Keefe K."/>
            <person name="Niedziela M."/>
            <person name="Raivio T."/>
            <person name="Crowley W.F. Jr."/>
            <person name="Seminara S.B."/>
            <person name="Quinton R."/>
            <person name="Hughes V.A."/>
            <person name="Kumanov P."/>
            <person name="Young J."/>
            <person name="Yialamas M.A."/>
            <person name="Hall J.E."/>
            <person name="Van Vliet G."/>
            <person name="Chanoine J.P."/>
            <person name="Rubenstein J."/>
            <person name="Mohammadi M."/>
            <person name="Tsai P.S."/>
            <person name="Sidis Y."/>
            <person name="Lage K."/>
            <person name="Pitteloud N."/>
        </authorList>
    </citation>
    <scope>POSSIBLE FUNCTION IN GNRH NEURON FATE SPECIFICATION</scope>
</reference>
<reference key="7">
    <citation type="journal article" date="2015" name="Exp. Eye Res.">
        <title>Negative regulation of TGFbeta-induced lens epithelial to mesenchymal transition (EMT) by RTK antagonists.</title>
        <authorList>
            <person name="Zhao G."/>
            <person name="Wojciechowski M.C."/>
            <person name="Jee S."/>
            <person name="Boros J."/>
            <person name="McAvoy J.W."/>
            <person name="Lovicu F.J."/>
        </authorList>
    </citation>
    <scope>FUNCTION</scope>
</reference>
<gene>
    <name type="primary">Il17rd</name>
    <name type="synonym">Il17rlm</name>
    <name type="synonym">Sef</name>
</gene>
<sequence length="738" mass="82348">MAPWLQLCSFFFTVNACLNGSQLAVAAGGSGRARGADTCGWRGVGPASRNSGLHNITFRYDNCTTYLNPGGKHAIADAQNITISQYACHDQVAVTILWSPGALGIEFLKGFRVILEELKSEGRQCQQLILKDPKQLNSSFRRTGMESQPFLNMKFETDYFVKIVPFPSIKNESNYHPFFFRTRACDLLLQPDNLACKPFWKPRNLNISQHGSDMHVSFDHAPQNFGFRGFHVLYKLKHEGPFRRRTCRQDQNTETTSCLLQNVSPGDYIIELVDDSNTTRKAAQYVVKSVQSPWAGPIRAVAITVPLVVISAFATLFTVMCRKKQQENIYSHLDEESPESSTYAAALPRDRLRPQPKVFLCYSNKDGQNHMNVVQCFAYFLQDFCGCEVALDLWEDFSLCREGQREWAIQKIHESQFIIVVCSKGMKYFVDKKNFRHKGGSRGEAQGEFFLVAVAAIAEKLRQAKQSSSAALRKFIAVYFDYSCEGDVPCSLDLSTKYKLMDHLPELCAHLHSGEQEVLGQHPGHSSRRNYFRSKSGRSLYVAICNMHQFIDEEPDWFEKQFIPFQHPPVRYQEPVLEKFDSGLVLNDVISKPGPESDFCRKVEACVLGAAGPADSYSYLESQHVGLDQDTEAQPSCDSAPALQPLLHAVKAGSPSEMPRDSGIYDSSVPSSELSLPLMEGLSPDQIETSSLTESVSSSSGLGEEDPPTLPSKLLASGVSREHGCHSHTDELQALAPL</sequence>
<organism>
    <name type="scientific">Mus musculus</name>
    <name type="common">Mouse</name>
    <dbReference type="NCBI Taxonomy" id="10090"/>
    <lineage>
        <taxon>Eukaryota</taxon>
        <taxon>Metazoa</taxon>
        <taxon>Chordata</taxon>
        <taxon>Craniata</taxon>
        <taxon>Vertebrata</taxon>
        <taxon>Euteleostomi</taxon>
        <taxon>Mammalia</taxon>
        <taxon>Eutheria</taxon>
        <taxon>Euarchontoglires</taxon>
        <taxon>Glires</taxon>
        <taxon>Rodentia</taxon>
        <taxon>Myomorpha</taxon>
        <taxon>Muroidea</taxon>
        <taxon>Muridae</taxon>
        <taxon>Murinae</taxon>
        <taxon>Mus</taxon>
        <taxon>Mus</taxon>
    </lineage>
</organism>
<dbReference type="EMBL" id="AF459444">
    <property type="protein sequence ID" value="AAM28441.1"/>
    <property type="molecule type" value="mRNA"/>
</dbReference>
<dbReference type="EMBL" id="AF424804">
    <property type="protein sequence ID" value="AAL79530.1"/>
    <property type="molecule type" value="mRNA"/>
</dbReference>
<dbReference type="EMBL" id="AF494209">
    <property type="protein sequence ID" value="AAM74078.1"/>
    <property type="molecule type" value="mRNA"/>
</dbReference>
<dbReference type="EMBL" id="AF494210">
    <property type="protein sequence ID" value="AAM74079.1"/>
    <property type="molecule type" value="mRNA"/>
</dbReference>
<dbReference type="EMBL" id="BC138629">
    <property type="protein sequence ID" value="AAI38630.1"/>
    <property type="molecule type" value="mRNA"/>
</dbReference>
<dbReference type="CCDS" id="CCDS26885.1">
    <molecule id="Q8JZL1-1"/>
</dbReference>
<dbReference type="RefSeq" id="NP_602319.1">
    <molecule id="Q8JZL1-1"/>
    <property type="nucleotide sequence ID" value="NM_134437.4"/>
</dbReference>
<dbReference type="RefSeq" id="XP_006518731.1">
    <molecule id="Q8JZL1-2"/>
    <property type="nucleotide sequence ID" value="XM_006518668.2"/>
</dbReference>
<dbReference type="SMR" id="Q8JZL1"/>
<dbReference type="BioGRID" id="228596">
    <property type="interactions" value="3"/>
</dbReference>
<dbReference type="CORUM" id="Q8JZL1"/>
<dbReference type="FunCoup" id="Q8JZL1">
    <property type="interactions" value="1129"/>
</dbReference>
<dbReference type="STRING" id="10090.ENSMUSP00000036076"/>
<dbReference type="GlyCosmos" id="Q8JZL1">
    <property type="glycosylation" value="8 sites, No reported glycans"/>
</dbReference>
<dbReference type="GlyGen" id="Q8JZL1">
    <property type="glycosylation" value="8 sites, 4 N-linked glycans (4 sites)"/>
</dbReference>
<dbReference type="PhosphoSitePlus" id="Q8JZL1"/>
<dbReference type="PaxDb" id="10090-ENSMUSP00000036076"/>
<dbReference type="PeptideAtlas" id="Q8JZL1"/>
<dbReference type="ProteomicsDB" id="267076">
    <molecule id="Q8JZL1-1"/>
</dbReference>
<dbReference type="ProteomicsDB" id="267077">
    <molecule id="Q8JZL1-2"/>
</dbReference>
<dbReference type="Antibodypedia" id="31518">
    <property type="antibodies" value="312 antibodies from 31 providers"/>
</dbReference>
<dbReference type="DNASU" id="171463"/>
<dbReference type="Ensembl" id="ENSMUST00000035336.5">
    <molecule id="Q8JZL1-1"/>
    <property type="protein sequence ID" value="ENSMUSP00000036076.4"/>
    <property type="gene ID" value="ENSMUSG00000040717.7"/>
</dbReference>
<dbReference type="Ensembl" id="ENSMUST00000225146.2">
    <molecule id="Q8JZL1-2"/>
    <property type="protein sequence ID" value="ENSMUSP00000153543.2"/>
    <property type="gene ID" value="ENSMUSG00000040717.7"/>
</dbReference>
<dbReference type="GeneID" id="171463"/>
<dbReference type="KEGG" id="mmu:171463"/>
<dbReference type="UCSC" id="uc007stl.1">
    <molecule id="Q8JZL1-1"/>
    <property type="organism name" value="mouse"/>
</dbReference>
<dbReference type="AGR" id="MGI:2159727"/>
<dbReference type="CTD" id="54756"/>
<dbReference type="MGI" id="MGI:2159727">
    <property type="gene designation" value="Il17rd"/>
</dbReference>
<dbReference type="VEuPathDB" id="HostDB:ENSMUSG00000040717"/>
<dbReference type="eggNOG" id="ENOG502QV61">
    <property type="taxonomic scope" value="Eukaryota"/>
</dbReference>
<dbReference type="GeneTree" id="ENSGT00940000156669"/>
<dbReference type="HOGENOM" id="CLU_024846_0_0_1"/>
<dbReference type="InParanoid" id="Q8JZL1"/>
<dbReference type="OMA" id="KNCKEDQ"/>
<dbReference type="OrthoDB" id="9325096at2759"/>
<dbReference type="PhylomeDB" id="Q8JZL1"/>
<dbReference type="TreeFam" id="TF329644"/>
<dbReference type="Reactome" id="R-MMU-5674135">
    <property type="pathway name" value="MAP2K and MAPK activation"/>
</dbReference>
<dbReference type="BioGRID-ORCS" id="171463">
    <property type="hits" value="5 hits in 76 CRISPR screens"/>
</dbReference>
<dbReference type="ChiTaRS" id="Il17rd">
    <property type="organism name" value="mouse"/>
</dbReference>
<dbReference type="PRO" id="PR:Q8JZL1"/>
<dbReference type="Proteomes" id="UP000000589">
    <property type="component" value="Chromosome 14"/>
</dbReference>
<dbReference type="RNAct" id="Q8JZL1">
    <property type="molecule type" value="protein"/>
</dbReference>
<dbReference type="Bgee" id="ENSMUSG00000040717">
    <property type="expression patterns" value="Expressed in vestibular epithelium and 209 other cell types or tissues"/>
</dbReference>
<dbReference type="ExpressionAtlas" id="Q8JZL1">
    <property type="expression patterns" value="baseline and differential"/>
</dbReference>
<dbReference type="GO" id="GO:0000139">
    <property type="term" value="C:Golgi membrane"/>
    <property type="evidence" value="ECO:0007669"/>
    <property type="project" value="UniProtKB-SubCell"/>
</dbReference>
<dbReference type="GO" id="GO:0005654">
    <property type="term" value="C:nucleoplasm"/>
    <property type="evidence" value="ECO:0007669"/>
    <property type="project" value="Ensembl"/>
</dbReference>
<dbReference type="GO" id="GO:0005886">
    <property type="term" value="C:plasma membrane"/>
    <property type="evidence" value="ECO:0007669"/>
    <property type="project" value="UniProtKB-SubCell"/>
</dbReference>
<dbReference type="GO" id="GO:0030368">
    <property type="term" value="F:interleukin-17 receptor activity"/>
    <property type="evidence" value="ECO:0007669"/>
    <property type="project" value="InterPro"/>
</dbReference>
<dbReference type="GO" id="GO:0010719">
    <property type="term" value="P:negative regulation of epithelial to mesenchymal transition"/>
    <property type="evidence" value="ECO:0000314"/>
    <property type="project" value="UniProtKB"/>
</dbReference>
<dbReference type="GO" id="GO:0030512">
    <property type="term" value="P:negative regulation of transforming growth factor beta receptor signaling pathway"/>
    <property type="evidence" value="ECO:0000314"/>
    <property type="project" value="UniProtKB"/>
</dbReference>
<dbReference type="FunFam" id="3.40.50.11530:FF:000003">
    <property type="entry name" value="Interleukin-17 receptor D"/>
    <property type="match status" value="1"/>
</dbReference>
<dbReference type="Gene3D" id="3.40.50.11530">
    <property type="match status" value="1"/>
</dbReference>
<dbReference type="InterPro" id="IPR039465">
    <property type="entry name" value="IL-17_rcpt-like"/>
</dbReference>
<dbReference type="InterPro" id="IPR031951">
    <property type="entry name" value="IL17R_D_N"/>
</dbReference>
<dbReference type="InterPro" id="IPR013568">
    <property type="entry name" value="SEFIR_dom"/>
</dbReference>
<dbReference type="InterPro" id="IPR013087">
    <property type="entry name" value="Znf_C2H2_type"/>
</dbReference>
<dbReference type="PANTHER" id="PTHR15583">
    <property type="entry name" value="INTERLEUKIN-17 RECEPTOR"/>
    <property type="match status" value="1"/>
</dbReference>
<dbReference type="PANTHER" id="PTHR15583:SF14">
    <property type="entry name" value="INTERLEUKIN-17 RECEPTOR D"/>
    <property type="match status" value="1"/>
</dbReference>
<dbReference type="Pfam" id="PF16742">
    <property type="entry name" value="IL17R_D_N"/>
    <property type="match status" value="1"/>
</dbReference>
<dbReference type="Pfam" id="PF08357">
    <property type="entry name" value="SEFIR"/>
    <property type="match status" value="1"/>
</dbReference>
<dbReference type="PROSITE" id="PS51534">
    <property type="entry name" value="SEFIR"/>
    <property type="match status" value="1"/>
</dbReference>
<proteinExistence type="evidence at protein level"/>
<accession>Q8JZL1</accession>
<accession>B2RRY7</accession>
<accession>Q8K447</accession>
<accession>Q8R5J8</accession>